<protein>
    <recommendedName>
        <fullName>Putative transporter AmpG 1</fullName>
    </recommendedName>
</protein>
<feature type="chain" id="PRO_0000281091" description="Putative transporter AmpG 1">
    <location>
        <begin position="1"/>
        <end position="417"/>
    </location>
</feature>
<feature type="transmembrane region" description="Helical" evidence="2">
    <location>
        <begin position="7"/>
        <end position="27"/>
    </location>
</feature>
<feature type="transmembrane region" description="Helical" evidence="2">
    <location>
        <begin position="42"/>
        <end position="62"/>
    </location>
</feature>
<feature type="transmembrane region" description="Helical" evidence="2">
    <location>
        <begin position="78"/>
        <end position="98"/>
    </location>
</feature>
<feature type="transmembrane region" description="Helical" evidence="2">
    <location>
        <begin position="104"/>
        <end position="124"/>
    </location>
</feature>
<feature type="transmembrane region" description="Helical" evidence="2">
    <location>
        <begin position="143"/>
        <end position="163"/>
    </location>
</feature>
<feature type="transmembrane region" description="Helical" evidence="2">
    <location>
        <begin position="171"/>
        <end position="191"/>
    </location>
</feature>
<feature type="transmembrane region" description="Helical" evidence="2">
    <location>
        <begin position="225"/>
        <end position="245"/>
    </location>
</feature>
<feature type="transmembrane region" description="Helical" evidence="2">
    <location>
        <begin position="273"/>
        <end position="293"/>
    </location>
</feature>
<feature type="transmembrane region" description="Helical" evidence="2">
    <location>
        <begin position="301"/>
        <end position="321"/>
    </location>
</feature>
<feature type="transmembrane region" description="Helical" evidence="2">
    <location>
        <begin position="328"/>
        <end position="348"/>
    </location>
</feature>
<feature type="transmembrane region" description="Helical" evidence="2">
    <location>
        <begin position="366"/>
        <end position="386"/>
    </location>
</feature>
<feature type="transmembrane region" description="Helical" evidence="2">
    <location>
        <begin position="389"/>
        <end position="409"/>
    </location>
</feature>
<accession>Q92HQ3</accession>
<name>AMPG1_RICCN</name>
<sequence length="417" mass="46761">MLNNSRLCIIWLFGLISGFNLMITGNTLNYWLAKEDIALQTIGILSFITLPYSINFLLAPIFDAVQIKYLNKIFGHRLSWICLTSSALIFLIYIFSFLDPSTNLLLFAFTALIISFFSAAQDTILSALRTEIVPKESLGFTSGIYIFGYRVGMLLAGSGAIYLSIYLTFNEIYKIFAGLVFIYLILLIVGIKYCDLNENIHIQIIKNDIKNNQNKKNIINFIYNALKPIGSVYFIILILIFLVLYRLPDNLINVMINPFLLHLEYDAFEIASVGKFCGVVGAIIGGLVGGVIMKHKNILNSIFLFGIIHALGHILFIFLEINGKNSLLLFITIGIASITGGMTMTAYIAFISALCQGKFRATQYSFLSSMMGISRSIFPIISGYMVVNFGWQNFFLFTTIITIPSLLILLKIKTKLQ</sequence>
<evidence type="ECO:0000250" key="1"/>
<evidence type="ECO:0000255" key="2"/>
<evidence type="ECO:0000305" key="3"/>
<dbReference type="EMBL" id="AE006914">
    <property type="protein sequence ID" value="AAL03256.1"/>
    <property type="molecule type" value="Genomic_DNA"/>
</dbReference>
<dbReference type="PIR" id="F97789">
    <property type="entry name" value="F97789"/>
</dbReference>
<dbReference type="RefSeq" id="WP_010977337.1">
    <property type="nucleotide sequence ID" value="NC_003103.1"/>
</dbReference>
<dbReference type="SMR" id="Q92HQ3"/>
<dbReference type="GeneID" id="927597"/>
<dbReference type="KEGG" id="rco:RC0718"/>
<dbReference type="PATRIC" id="fig|272944.4.peg.817"/>
<dbReference type="HOGENOM" id="CLU_029352_1_2_5"/>
<dbReference type="Proteomes" id="UP000000816">
    <property type="component" value="Chromosome"/>
</dbReference>
<dbReference type="GO" id="GO:0005886">
    <property type="term" value="C:plasma membrane"/>
    <property type="evidence" value="ECO:0007669"/>
    <property type="project" value="UniProtKB-SubCell"/>
</dbReference>
<dbReference type="GO" id="GO:0022857">
    <property type="term" value="F:transmembrane transporter activity"/>
    <property type="evidence" value="ECO:0007669"/>
    <property type="project" value="InterPro"/>
</dbReference>
<dbReference type="Gene3D" id="1.20.1250.20">
    <property type="entry name" value="MFS general substrate transporter like domains"/>
    <property type="match status" value="2"/>
</dbReference>
<dbReference type="InterPro" id="IPR004752">
    <property type="entry name" value="AmpG_permease/AT-1"/>
</dbReference>
<dbReference type="InterPro" id="IPR011701">
    <property type="entry name" value="MFS"/>
</dbReference>
<dbReference type="InterPro" id="IPR020846">
    <property type="entry name" value="MFS_dom"/>
</dbReference>
<dbReference type="InterPro" id="IPR036259">
    <property type="entry name" value="MFS_trans_sf"/>
</dbReference>
<dbReference type="NCBIfam" id="TIGR00901">
    <property type="entry name" value="2A0125"/>
    <property type="match status" value="1"/>
</dbReference>
<dbReference type="PANTHER" id="PTHR12778:SF10">
    <property type="entry name" value="MAJOR FACILITATOR SUPERFAMILY DOMAIN-CONTAINING PROTEIN 3"/>
    <property type="match status" value="1"/>
</dbReference>
<dbReference type="PANTHER" id="PTHR12778">
    <property type="entry name" value="SOLUTE CARRIER FAMILY 33 ACETYL-COA TRANSPORTER -RELATED"/>
    <property type="match status" value="1"/>
</dbReference>
<dbReference type="Pfam" id="PF07690">
    <property type="entry name" value="MFS_1"/>
    <property type="match status" value="1"/>
</dbReference>
<dbReference type="SUPFAM" id="SSF103473">
    <property type="entry name" value="MFS general substrate transporter"/>
    <property type="match status" value="1"/>
</dbReference>
<dbReference type="PROSITE" id="PS50850">
    <property type="entry name" value="MFS"/>
    <property type="match status" value="1"/>
</dbReference>
<comment type="subcellular location">
    <subcellularLocation>
        <location evidence="1">Cell inner membrane</location>
        <topology evidence="1">Multi-pass membrane protein</topology>
    </subcellularLocation>
</comment>
<comment type="similarity">
    <text evidence="3">Belongs to the major facilitator superfamily.</text>
</comment>
<keyword id="KW-0997">Cell inner membrane</keyword>
<keyword id="KW-1003">Cell membrane</keyword>
<keyword id="KW-0472">Membrane</keyword>
<keyword id="KW-0812">Transmembrane</keyword>
<keyword id="KW-1133">Transmembrane helix</keyword>
<keyword id="KW-0813">Transport</keyword>
<organism>
    <name type="scientific">Rickettsia conorii (strain ATCC VR-613 / Malish 7)</name>
    <dbReference type="NCBI Taxonomy" id="272944"/>
    <lineage>
        <taxon>Bacteria</taxon>
        <taxon>Pseudomonadati</taxon>
        <taxon>Pseudomonadota</taxon>
        <taxon>Alphaproteobacteria</taxon>
        <taxon>Rickettsiales</taxon>
        <taxon>Rickettsiaceae</taxon>
        <taxon>Rickettsieae</taxon>
        <taxon>Rickettsia</taxon>
        <taxon>spotted fever group</taxon>
    </lineage>
</organism>
<gene>
    <name type="primary">ampG1</name>
    <name type="ordered locus">RC0718</name>
</gene>
<reference key="1">
    <citation type="journal article" date="2001" name="Science">
        <title>Mechanisms of evolution in Rickettsia conorii and R. prowazekii.</title>
        <authorList>
            <person name="Ogata H."/>
            <person name="Audic S."/>
            <person name="Renesto-Audiffren P."/>
            <person name="Fournier P.-E."/>
            <person name="Barbe V."/>
            <person name="Samson D."/>
            <person name="Roux V."/>
            <person name="Cossart P."/>
            <person name="Weissenbach J."/>
            <person name="Claverie J.-M."/>
            <person name="Raoult D."/>
        </authorList>
    </citation>
    <scope>NUCLEOTIDE SEQUENCE [LARGE SCALE GENOMIC DNA]</scope>
    <source>
        <strain>ATCC VR-613 / Malish 7</strain>
    </source>
</reference>
<proteinExistence type="inferred from homology"/>